<protein>
    <recommendedName>
        <fullName evidence="1">Elongation factor P</fullName>
        <shortName evidence="1">EF-P</shortName>
    </recommendedName>
</protein>
<feature type="chain" id="PRO_1000076524" description="Elongation factor P">
    <location>
        <begin position="1"/>
        <end position="186"/>
    </location>
</feature>
<name>EFP_POLAQ</name>
<accession>A4SVW9</accession>
<organism>
    <name type="scientific">Polynucleobacter asymbioticus (strain DSM 18221 / CIP 109841 / QLW-P1DMWA-1)</name>
    <name type="common">Polynucleobacter necessarius subsp. asymbioticus</name>
    <dbReference type="NCBI Taxonomy" id="312153"/>
    <lineage>
        <taxon>Bacteria</taxon>
        <taxon>Pseudomonadati</taxon>
        <taxon>Pseudomonadota</taxon>
        <taxon>Betaproteobacteria</taxon>
        <taxon>Burkholderiales</taxon>
        <taxon>Burkholderiaceae</taxon>
        <taxon>Polynucleobacter</taxon>
    </lineage>
</organism>
<comment type="function">
    <text evidence="1">Involved in peptide bond synthesis. Stimulates efficient translation and peptide-bond synthesis on native or reconstituted 70S ribosomes in vitro. Probably functions indirectly by altering the affinity of the ribosome for aminoacyl-tRNA, thus increasing their reactivity as acceptors for peptidyl transferase.</text>
</comment>
<comment type="pathway">
    <text evidence="1">Protein biosynthesis; polypeptide chain elongation.</text>
</comment>
<comment type="subcellular location">
    <subcellularLocation>
        <location evidence="1">Cytoplasm</location>
    </subcellularLocation>
</comment>
<comment type="similarity">
    <text evidence="1">Belongs to the elongation factor P family.</text>
</comment>
<proteinExistence type="inferred from homology"/>
<sequence>MKTAQELRVGNVVMIGTDAMVVLKAEYSRSGRNSSVVKMKFKNLLTGAPNEGVFKADDKFDVVILDKKECTYSYFADPMYVFMDTEYNQYEVEAEFMGDALNYLEESMPCEVVFYEGKALSVAMPNSLVREIIYTEPAVKGDTSSGKVLKNAKLATGYELQVPLFCNTGDKIEIDTRTGEYRSRAN</sequence>
<keyword id="KW-0963">Cytoplasm</keyword>
<keyword id="KW-0251">Elongation factor</keyword>
<keyword id="KW-0648">Protein biosynthesis</keyword>
<keyword id="KW-1185">Reference proteome</keyword>
<gene>
    <name evidence="1" type="primary">efp</name>
    <name type="ordered locus">Pnuc_0413</name>
</gene>
<dbReference type="EMBL" id="CP000655">
    <property type="protein sequence ID" value="ABP33633.1"/>
    <property type="molecule type" value="Genomic_DNA"/>
</dbReference>
<dbReference type="RefSeq" id="WP_011902258.1">
    <property type="nucleotide sequence ID" value="NC_009379.1"/>
</dbReference>
<dbReference type="SMR" id="A4SVW9"/>
<dbReference type="GeneID" id="31480764"/>
<dbReference type="KEGG" id="pnu:Pnuc_0413"/>
<dbReference type="eggNOG" id="COG0231">
    <property type="taxonomic scope" value="Bacteria"/>
</dbReference>
<dbReference type="HOGENOM" id="CLU_074944_2_1_4"/>
<dbReference type="UniPathway" id="UPA00345"/>
<dbReference type="Proteomes" id="UP000000231">
    <property type="component" value="Chromosome"/>
</dbReference>
<dbReference type="GO" id="GO:0005737">
    <property type="term" value="C:cytoplasm"/>
    <property type="evidence" value="ECO:0007669"/>
    <property type="project" value="UniProtKB-SubCell"/>
</dbReference>
<dbReference type="GO" id="GO:0003746">
    <property type="term" value="F:translation elongation factor activity"/>
    <property type="evidence" value="ECO:0007669"/>
    <property type="project" value="UniProtKB-UniRule"/>
</dbReference>
<dbReference type="GO" id="GO:0043043">
    <property type="term" value="P:peptide biosynthetic process"/>
    <property type="evidence" value="ECO:0007669"/>
    <property type="project" value="InterPro"/>
</dbReference>
<dbReference type="CDD" id="cd04470">
    <property type="entry name" value="S1_EF-P_repeat_1"/>
    <property type="match status" value="1"/>
</dbReference>
<dbReference type="CDD" id="cd05794">
    <property type="entry name" value="S1_EF-P_repeat_2"/>
    <property type="match status" value="1"/>
</dbReference>
<dbReference type="FunFam" id="2.30.30.30:FF:000003">
    <property type="entry name" value="Elongation factor P"/>
    <property type="match status" value="1"/>
</dbReference>
<dbReference type="FunFam" id="2.40.50.140:FF:000004">
    <property type="entry name" value="Elongation factor P"/>
    <property type="match status" value="1"/>
</dbReference>
<dbReference type="FunFam" id="2.40.50.140:FF:000009">
    <property type="entry name" value="Elongation factor P"/>
    <property type="match status" value="1"/>
</dbReference>
<dbReference type="Gene3D" id="2.30.30.30">
    <property type="match status" value="1"/>
</dbReference>
<dbReference type="Gene3D" id="2.40.50.140">
    <property type="entry name" value="Nucleic acid-binding proteins"/>
    <property type="match status" value="2"/>
</dbReference>
<dbReference type="HAMAP" id="MF_00141">
    <property type="entry name" value="EF_P"/>
    <property type="match status" value="1"/>
</dbReference>
<dbReference type="InterPro" id="IPR015365">
    <property type="entry name" value="Elong-fact-P_C"/>
</dbReference>
<dbReference type="InterPro" id="IPR012340">
    <property type="entry name" value="NA-bd_OB-fold"/>
</dbReference>
<dbReference type="InterPro" id="IPR014722">
    <property type="entry name" value="Rib_uL2_dom2"/>
</dbReference>
<dbReference type="InterPro" id="IPR020599">
    <property type="entry name" value="Transl_elong_fac_P/YeiP"/>
</dbReference>
<dbReference type="InterPro" id="IPR013185">
    <property type="entry name" value="Transl_elong_KOW-like"/>
</dbReference>
<dbReference type="InterPro" id="IPR001059">
    <property type="entry name" value="Transl_elong_P/YeiP_cen"/>
</dbReference>
<dbReference type="InterPro" id="IPR013852">
    <property type="entry name" value="Transl_elong_P/YeiP_CS"/>
</dbReference>
<dbReference type="InterPro" id="IPR011768">
    <property type="entry name" value="Transl_elongation_fac_P"/>
</dbReference>
<dbReference type="InterPro" id="IPR008991">
    <property type="entry name" value="Translation_prot_SH3-like_sf"/>
</dbReference>
<dbReference type="NCBIfam" id="TIGR00038">
    <property type="entry name" value="efp"/>
    <property type="match status" value="1"/>
</dbReference>
<dbReference type="NCBIfam" id="NF001810">
    <property type="entry name" value="PRK00529.1"/>
    <property type="match status" value="1"/>
</dbReference>
<dbReference type="PANTHER" id="PTHR30053">
    <property type="entry name" value="ELONGATION FACTOR P"/>
    <property type="match status" value="1"/>
</dbReference>
<dbReference type="PANTHER" id="PTHR30053:SF12">
    <property type="entry name" value="ELONGATION FACTOR P (EF-P) FAMILY PROTEIN"/>
    <property type="match status" value="1"/>
</dbReference>
<dbReference type="Pfam" id="PF01132">
    <property type="entry name" value="EFP"/>
    <property type="match status" value="1"/>
</dbReference>
<dbReference type="Pfam" id="PF08207">
    <property type="entry name" value="EFP_N"/>
    <property type="match status" value="1"/>
</dbReference>
<dbReference type="Pfam" id="PF09285">
    <property type="entry name" value="Elong-fact-P_C"/>
    <property type="match status" value="1"/>
</dbReference>
<dbReference type="PIRSF" id="PIRSF005901">
    <property type="entry name" value="EF-P"/>
    <property type="match status" value="1"/>
</dbReference>
<dbReference type="SMART" id="SM01185">
    <property type="entry name" value="EFP"/>
    <property type="match status" value="1"/>
</dbReference>
<dbReference type="SMART" id="SM00841">
    <property type="entry name" value="Elong-fact-P_C"/>
    <property type="match status" value="1"/>
</dbReference>
<dbReference type="SUPFAM" id="SSF50249">
    <property type="entry name" value="Nucleic acid-binding proteins"/>
    <property type="match status" value="2"/>
</dbReference>
<dbReference type="SUPFAM" id="SSF50104">
    <property type="entry name" value="Translation proteins SH3-like domain"/>
    <property type="match status" value="1"/>
</dbReference>
<dbReference type="PROSITE" id="PS01275">
    <property type="entry name" value="EFP"/>
    <property type="match status" value="1"/>
</dbReference>
<reference key="1">
    <citation type="journal article" date="2012" name="Stand. Genomic Sci.">
        <title>Complete genome sequence of Polynucleobacter necessarius subsp. asymbioticus type strain (QLW-P1DMWA-1(T)).</title>
        <authorList>
            <person name="Meincke L."/>
            <person name="Copeland A."/>
            <person name="Lapidus A."/>
            <person name="Lucas S."/>
            <person name="Berry K.W."/>
            <person name="Del Rio T.G."/>
            <person name="Hammon N."/>
            <person name="Dalin E."/>
            <person name="Tice H."/>
            <person name="Pitluck S."/>
            <person name="Richardson P."/>
            <person name="Bruce D."/>
            <person name="Goodwin L."/>
            <person name="Han C."/>
            <person name="Tapia R."/>
            <person name="Detter J.C."/>
            <person name="Schmutz J."/>
            <person name="Brettin T."/>
            <person name="Larimer F."/>
            <person name="Land M."/>
            <person name="Hauser L."/>
            <person name="Kyrpides N.C."/>
            <person name="Ivanova N."/>
            <person name="Goker M."/>
            <person name="Woyke T."/>
            <person name="Wu Q.L."/>
            <person name="Pockl M."/>
            <person name="Hahn M.W."/>
            <person name="Klenk H.P."/>
        </authorList>
    </citation>
    <scope>NUCLEOTIDE SEQUENCE [LARGE SCALE GENOMIC DNA]</scope>
    <source>
        <strain>DSM 18221 / CIP 109841 / QLW-P1DMWA-1</strain>
    </source>
</reference>
<evidence type="ECO:0000255" key="1">
    <source>
        <dbReference type="HAMAP-Rule" id="MF_00141"/>
    </source>
</evidence>